<comment type="function">
    <text evidence="1">Part of a membrane-bound complex that couples electron transfer with translocation of ions across the membrane.</text>
</comment>
<comment type="cofactor">
    <cofactor evidence="1">
        <name>[4Fe-4S] cluster</name>
        <dbReference type="ChEBI" id="CHEBI:49883"/>
    </cofactor>
    <text evidence="1">Binds 3 [4Fe-4S] clusters.</text>
</comment>
<comment type="subunit">
    <text evidence="1">The complex is composed of six subunits: RnfA, RnfB, RnfC, RnfD, RnfE and RnfG.</text>
</comment>
<comment type="subcellular location">
    <subcellularLocation>
        <location evidence="1">Cell inner membrane</location>
    </subcellularLocation>
</comment>
<comment type="similarity">
    <text evidence="1">Belongs to the 4Fe4S bacterial-type ferredoxin family. RnfB subfamily.</text>
</comment>
<evidence type="ECO:0000255" key="1">
    <source>
        <dbReference type="HAMAP-Rule" id="MF_00463"/>
    </source>
</evidence>
<reference key="1">
    <citation type="journal article" date="2009" name="Science">
        <title>The dynamics and time scale of ongoing genomic erosion in symbiotic bacteria.</title>
        <authorList>
            <person name="Moran N.A."/>
            <person name="McLaughlin H.J."/>
            <person name="Sorek R."/>
        </authorList>
    </citation>
    <scope>NUCLEOTIDE SEQUENCE [LARGE SCALE GENOMIC DNA]</scope>
    <source>
        <strain>5A</strain>
    </source>
</reference>
<name>RNFB_BUCA5</name>
<protein>
    <recommendedName>
        <fullName evidence="1">Ion-translocating oxidoreductase complex subunit B</fullName>
        <ecNumber evidence="1">7.-.-.-</ecNumber>
    </recommendedName>
    <alternativeName>
        <fullName evidence="1">Rnf electron transport complex subunit B</fullName>
    </alternativeName>
</protein>
<dbReference type="EC" id="7.-.-.-" evidence="1"/>
<dbReference type="EMBL" id="CP001161">
    <property type="protein sequence ID" value="ACL30487.1"/>
    <property type="molecule type" value="Genomic_DNA"/>
</dbReference>
<dbReference type="RefSeq" id="WP_010895952.1">
    <property type="nucleotide sequence ID" value="NC_011833.1"/>
</dbReference>
<dbReference type="SMR" id="B8D8R5"/>
<dbReference type="KEGG" id="bap:BUAP5A_112"/>
<dbReference type="HOGENOM" id="CLU_063448_2_0_6"/>
<dbReference type="OrthoDB" id="9789936at2"/>
<dbReference type="Proteomes" id="UP000006904">
    <property type="component" value="Chromosome"/>
</dbReference>
<dbReference type="GO" id="GO:0005886">
    <property type="term" value="C:plasma membrane"/>
    <property type="evidence" value="ECO:0007669"/>
    <property type="project" value="UniProtKB-SubCell"/>
</dbReference>
<dbReference type="GO" id="GO:0051539">
    <property type="term" value="F:4 iron, 4 sulfur cluster binding"/>
    <property type="evidence" value="ECO:0007669"/>
    <property type="project" value="UniProtKB-UniRule"/>
</dbReference>
<dbReference type="GO" id="GO:0009055">
    <property type="term" value="F:electron transfer activity"/>
    <property type="evidence" value="ECO:0007669"/>
    <property type="project" value="InterPro"/>
</dbReference>
<dbReference type="GO" id="GO:0046872">
    <property type="term" value="F:metal ion binding"/>
    <property type="evidence" value="ECO:0007669"/>
    <property type="project" value="UniProtKB-KW"/>
</dbReference>
<dbReference type="GO" id="GO:0022900">
    <property type="term" value="P:electron transport chain"/>
    <property type="evidence" value="ECO:0007669"/>
    <property type="project" value="UniProtKB-UniRule"/>
</dbReference>
<dbReference type="Gene3D" id="3.30.70.20">
    <property type="match status" value="1"/>
</dbReference>
<dbReference type="Gene3D" id="1.10.15.40">
    <property type="entry name" value="Electron transport complex subunit B, putative Fe-S cluster"/>
    <property type="match status" value="1"/>
</dbReference>
<dbReference type="HAMAP" id="MF_00463">
    <property type="entry name" value="RsxB_RnfB"/>
    <property type="match status" value="1"/>
</dbReference>
<dbReference type="InterPro" id="IPR007202">
    <property type="entry name" value="4Fe-4S_dom"/>
</dbReference>
<dbReference type="InterPro" id="IPR017896">
    <property type="entry name" value="4Fe4S_Fe-S-bd"/>
</dbReference>
<dbReference type="InterPro" id="IPR017900">
    <property type="entry name" value="4Fe4S_Fe_S_CS"/>
</dbReference>
<dbReference type="InterPro" id="IPR010207">
    <property type="entry name" value="Elect_transpt_cplx_RnfB/RsxB"/>
</dbReference>
<dbReference type="InterPro" id="IPR016463">
    <property type="entry name" value="RnfB/RsxB_Proteobac"/>
</dbReference>
<dbReference type="InterPro" id="IPR050294">
    <property type="entry name" value="RnfB_subfamily"/>
</dbReference>
<dbReference type="NCBIfam" id="TIGR01944">
    <property type="entry name" value="rnfB"/>
    <property type="match status" value="1"/>
</dbReference>
<dbReference type="PANTHER" id="PTHR42859:SF3">
    <property type="entry name" value="ION-TRANSLOCATING OXIDOREDUCTASE COMPLEX SUBUNIT B"/>
    <property type="match status" value="1"/>
</dbReference>
<dbReference type="PANTHER" id="PTHR42859">
    <property type="entry name" value="OXIDOREDUCTASE"/>
    <property type="match status" value="1"/>
</dbReference>
<dbReference type="Pfam" id="PF14697">
    <property type="entry name" value="Fer4_21"/>
    <property type="match status" value="1"/>
</dbReference>
<dbReference type="Pfam" id="PF04060">
    <property type="entry name" value="FeS"/>
    <property type="match status" value="1"/>
</dbReference>
<dbReference type="PIRSF" id="PIRSF005784">
    <property type="entry name" value="Elect_transpt_RnfB"/>
    <property type="match status" value="1"/>
</dbReference>
<dbReference type="SUPFAM" id="SSF54862">
    <property type="entry name" value="4Fe-4S ferredoxins"/>
    <property type="match status" value="1"/>
</dbReference>
<dbReference type="PROSITE" id="PS51656">
    <property type="entry name" value="4FE4S"/>
    <property type="match status" value="1"/>
</dbReference>
<dbReference type="PROSITE" id="PS00198">
    <property type="entry name" value="4FE4S_FER_1"/>
    <property type="match status" value="2"/>
</dbReference>
<dbReference type="PROSITE" id="PS51379">
    <property type="entry name" value="4FE4S_FER_2"/>
    <property type="match status" value="2"/>
</dbReference>
<sequence>MITLIIFSFLSFLLGIILSFTAYKFRSQEDPIVAIVNELLPQSQCAQCGYSGCYPYAKAIVENSEKINKCIPGGTDLISAISSVLSIEVPEKNLIITHKKQKNNTVLINESNCVGCSKCASFCPVDAIVGAPNFIHTVLQEFCTGCNICLLHCPTNCIEIKKETYEE</sequence>
<accession>B8D8R5</accession>
<proteinExistence type="inferred from homology"/>
<keyword id="KW-0004">4Fe-4S</keyword>
<keyword id="KW-0997">Cell inner membrane</keyword>
<keyword id="KW-1003">Cell membrane</keyword>
<keyword id="KW-0249">Electron transport</keyword>
<keyword id="KW-0408">Iron</keyword>
<keyword id="KW-0411">Iron-sulfur</keyword>
<keyword id="KW-0472">Membrane</keyword>
<keyword id="KW-0479">Metal-binding</keyword>
<keyword id="KW-0677">Repeat</keyword>
<keyword id="KW-1278">Translocase</keyword>
<keyword id="KW-0813">Transport</keyword>
<organism>
    <name type="scientific">Buchnera aphidicola subsp. Acyrthosiphon pisum (strain 5A)</name>
    <dbReference type="NCBI Taxonomy" id="563178"/>
    <lineage>
        <taxon>Bacteria</taxon>
        <taxon>Pseudomonadati</taxon>
        <taxon>Pseudomonadota</taxon>
        <taxon>Gammaproteobacteria</taxon>
        <taxon>Enterobacterales</taxon>
        <taxon>Erwiniaceae</taxon>
        <taxon>Buchnera</taxon>
    </lineage>
</organism>
<feature type="chain" id="PRO_1000194471" description="Ion-translocating oxidoreductase complex subunit B">
    <location>
        <begin position="1"/>
        <end position="167"/>
    </location>
</feature>
<feature type="domain" description="4Fe-4S" evidence="1">
    <location>
        <begin position="28"/>
        <end position="87"/>
    </location>
</feature>
<feature type="domain" description="4Fe-4S ferredoxin-type 1" evidence="1">
    <location>
        <begin position="104"/>
        <end position="133"/>
    </location>
</feature>
<feature type="domain" description="4Fe-4S ferredoxin-type 2" evidence="1">
    <location>
        <begin position="134"/>
        <end position="163"/>
    </location>
</feature>
<feature type="region of interest" description="Hydrophobic" evidence="1">
    <location>
        <begin position="1"/>
        <end position="22"/>
    </location>
</feature>
<feature type="binding site" evidence="1">
    <location>
        <position position="45"/>
    </location>
    <ligand>
        <name>[4Fe-4S] cluster</name>
        <dbReference type="ChEBI" id="CHEBI:49883"/>
        <label>1</label>
    </ligand>
</feature>
<feature type="binding site" evidence="1">
    <location>
        <position position="48"/>
    </location>
    <ligand>
        <name>[4Fe-4S] cluster</name>
        <dbReference type="ChEBI" id="CHEBI:49883"/>
        <label>1</label>
    </ligand>
</feature>
<feature type="binding site" evidence="1">
    <location>
        <position position="53"/>
    </location>
    <ligand>
        <name>[4Fe-4S] cluster</name>
        <dbReference type="ChEBI" id="CHEBI:49883"/>
        <label>1</label>
    </ligand>
</feature>
<feature type="binding site" evidence="1">
    <location>
        <position position="70"/>
    </location>
    <ligand>
        <name>[4Fe-4S] cluster</name>
        <dbReference type="ChEBI" id="CHEBI:49883"/>
        <label>1</label>
    </ligand>
</feature>
<feature type="binding site" evidence="1">
    <location>
        <position position="113"/>
    </location>
    <ligand>
        <name>[4Fe-4S] cluster</name>
        <dbReference type="ChEBI" id="CHEBI:49883"/>
        <label>2</label>
    </ligand>
</feature>
<feature type="binding site" evidence="1">
    <location>
        <position position="116"/>
    </location>
    <ligand>
        <name>[4Fe-4S] cluster</name>
        <dbReference type="ChEBI" id="CHEBI:49883"/>
        <label>2</label>
    </ligand>
</feature>
<feature type="binding site" evidence="1">
    <location>
        <position position="119"/>
    </location>
    <ligand>
        <name>[4Fe-4S] cluster</name>
        <dbReference type="ChEBI" id="CHEBI:49883"/>
        <label>2</label>
    </ligand>
</feature>
<feature type="binding site" evidence="1">
    <location>
        <position position="123"/>
    </location>
    <ligand>
        <name>[4Fe-4S] cluster</name>
        <dbReference type="ChEBI" id="CHEBI:49883"/>
        <label>3</label>
    </ligand>
</feature>
<feature type="binding site" evidence="1">
    <location>
        <position position="143"/>
    </location>
    <ligand>
        <name>[4Fe-4S] cluster</name>
        <dbReference type="ChEBI" id="CHEBI:49883"/>
        <label>3</label>
    </ligand>
</feature>
<feature type="binding site" evidence="1">
    <location>
        <position position="146"/>
    </location>
    <ligand>
        <name>[4Fe-4S] cluster</name>
        <dbReference type="ChEBI" id="CHEBI:49883"/>
        <label>3</label>
    </ligand>
</feature>
<feature type="binding site" evidence="1">
    <location>
        <position position="149"/>
    </location>
    <ligand>
        <name>[4Fe-4S] cluster</name>
        <dbReference type="ChEBI" id="CHEBI:49883"/>
        <label>3</label>
    </ligand>
</feature>
<feature type="binding site" evidence="1">
    <location>
        <position position="153"/>
    </location>
    <ligand>
        <name>[4Fe-4S] cluster</name>
        <dbReference type="ChEBI" id="CHEBI:49883"/>
        <label>2</label>
    </ligand>
</feature>
<gene>
    <name evidence="1" type="primary">rnfB</name>
    <name type="ordered locus">BUAP5A_112</name>
</gene>